<sequence length="198" mass="23143">MYNIKFLDLLNSNLKPNPQWIFKDPHPILREVTQDIEGNELSKDDIYYLKKMVRYIDVCYHNQAKKYKIRSGIAIAANQVGWNKRATYIHFNDEAKEHHYLLINPHIIKRSSEIAYLNPGEGCLSVDDDRSGYVIRNKKVHVKAYDLISEQFIDQEFSGIIAICIQHEIGHLDAGLYYDNINQQQPFYADPSWTKIGR</sequence>
<comment type="function">
    <text evidence="1">Removes the formyl group from the N-terminal Met of newly synthesized proteins. Requires at least a dipeptide for an efficient rate of reaction. N-terminal L-methionine is a prerequisite for activity but the enzyme has broad specificity at other positions.</text>
</comment>
<comment type="catalytic activity">
    <reaction evidence="1">
        <text>N-terminal N-formyl-L-methionyl-[peptide] + H2O = N-terminal L-methionyl-[peptide] + formate</text>
        <dbReference type="Rhea" id="RHEA:24420"/>
        <dbReference type="Rhea" id="RHEA-COMP:10639"/>
        <dbReference type="Rhea" id="RHEA-COMP:10640"/>
        <dbReference type="ChEBI" id="CHEBI:15377"/>
        <dbReference type="ChEBI" id="CHEBI:15740"/>
        <dbReference type="ChEBI" id="CHEBI:49298"/>
        <dbReference type="ChEBI" id="CHEBI:64731"/>
        <dbReference type="EC" id="3.5.1.88"/>
    </reaction>
</comment>
<comment type="cofactor">
    <cofactor evidence="1">
        <name>Fe(2+)</name>
        <dbReference type="ChEBI" id="CHEBI:29033"/>
    </cofactor>
    <text evidence="1">Binds 1 Fe(2+) ion.</text>
</comment>
<comment type="similarity">
    <text evidence="1">Belongs to the polypeptide deformylase family.</text>
</comment>
<feature type="chain" id="PRO_1000076954" description="Peptide deformylase">
    <location>
        <begin position="1"/>
        <end position="198"/>
    </location>
</feature>
<feature type="active site" evidence="1">
    <location>
        <position position="168"/>
    </location>
</feature>
<feature type="binding site" evidence="1">
    <location>
        <position position="123"/>
    </location>
    <ligand>
        <name>Fe cation</name>
        <dbReference type="ChEBI" id="CHEBI:24875"/>
    </ligand>
</feature>
<feature type="binding site" evidence="1">
    <location>
        <position position="167"/>
    </location>
    <ligand>
        <name>Fe cation</name>
        <dbReference type="ChEBI" id="CHEBI:24875"/>
    </ligand>
</feature>
<feature type="binding site" evidence="1">
    <location>
        <position position="171"/>
    </location>
    <ligand>
        <name>Fe cation</name>
        <dbReference type="ChEBI" id="CHEBI:24875"/>
    </ligand>
</feature>
<proteinExistence type="inferred from homology"/>
<accession>B1AJA6</accession>
<protein>
    <recommendedName>
        <fullName evidence="1">Peptide deformylase</fullName>
        <shortName evidence="1">PDF</shortName>
        <ecNumber evidence="1">3.5.1.88</ecNumber>
    </recommendedName>
    <alternativeName>
        <fullName evidence="1">Polypeptide deformylase</fullName>
    </alternativeName>
</protein>
<name>DEF_UREP2</name>
<reference key="1">
    <citation type="submission" date="2008-02" db="EMBL/GenBank/DDBJ databases">
        <title>Genome sequence of Ureaplasma parvum serovar 3.</title>
        <authorList>
            <person name="Methe B.A."/>
            <person name="Glass J."/>
            <person name="Waites K."/>
            <person name="Shrivastava S."/>
        </authorList>
    </citation>
    <scope>NUCLEOTIDE SEQUENCE [LARGE SCALE GENOMIC DNA]</scope>
    <source>
        <strain>ATCC 27815 / 27 / NCTC 11736</strain>
    </source>
</reference>
<evidence type="ECO:0000255" key="1">
    <source>
        <dbReference type="HAMAP-Rule" id="MF_00163"/>
    </source>
</evidence>
<keyword id="KW-0378">Hydrolase</keyword>
<keyword id="KW-0408">Iron</keyword>
<keyword id="KW-0479">Metal-binding</keyword>
<keyword id="KW-0648">Protein biosynthesis</keyword>
<dbReference type="EC" id="3.5.1.88" evidence="1"/>
<dbReference type="EMBL" id="CP000942">
    <property type="protein sequence ID" value="ACA32898.1"/>
    <property type="molecule type" value="Genomic_DNA"/>
</dbReference>
<dbReference type="RefSeq" id="WP_010891784.1">
    <property type="nucleotide sequence ID" value="NC_010503.1"/>
</dbReference>
<dbReference type="SMR" id="B1AJA6"/>
<dbReference type="GeneID" id="29672237"/>
<dbReference type="KEGG" id="upa:UPA3_0484"/>
<dbReference type="HOGENOM" id="CLU_061901_4_0_14"/>
<dbReference type="Proteomes" id="UP000002162">
    <property type="component" value="Chromosome"/>
</dbReference>
<dbReference type="GO" id="GO:0046872">
    <property type="term" value="F:metal ion binding"/>
    <property type="evidence" value="ECO:0007669"/>
    <property type="project" value="UniProtKB-KW"/>
</dbReference>
<dbReference type="GO" id="GO:0042586">
    <property type="term" value="F:peptide deformylase activity"/>
    <property type="evidence" value="ECO:0007669"/>
    <property type="project" value="UniProtKB-UniRule"/>
</dbReference>
<dbReference type="GO" id="GO:0043686">
    <property type="term" value="P:co-translational protein modification"/>
    <property type="evidence" value="ECO:0007669"/>
    <property type="project" value="TreeGrafter"/>
</dbReference>
<dbReference type="GO" id="GO:0006412">
    <property type="term" value="P:translation"/>
    <property type="evidence" value="ECO:0007669"/>
    <property type="project" value="UniProtKB-UniRule"/>
</dbReference>
<dbReference type="CDD" id="cd00487">
    <property type="entry name" value="Pep_deformylase"/>
    <property type="match status" value="1"/>
</dbReference>
<dbReference type="Gene3D" id="3.90.45.10">
    <property type="entry name" value="Peptide deformylase"/>
    <property type="match status" value="1"/>
</dbReference>
<dbReference type="HAMAP" id="MF_00163">
    <property type="entry name" value="Pep_deformylase"/>
    <property type="match status" value="1"/>
</dbReference>
<dbReference type="InterPro" id="IPR023635">
    <property type="entry name" value="Peptide_deformylase"/>
</dbReference>
<dbReference type="InterPro" id="IPR036821">
    <property type="entry name" value="Peptide_deformylase_sf"/>
</dbReference>
<dbReference type="NCBIfam" id="TIGR00079">
    <property type="entry name" value="pept_deformyl"/>
    <property type="match status" value="1"/>
</dbReference>
<dbReference type="PANTHER" id="PTHR10458">
    <property type="entry name" value="PEPTIDE DEFORMYLASE"/>
    <property type="match status" value="1"/>
</dbReference>
<dbReference type="PANTHER" id="PTHR10458:SF22">
    <property type="entry name" value="PEPTIDE DEFORMYLASE"/>
    <property type="match status" value="1"/>
</dbReference>
<dbReference type="Pfam" id="PF01327">
    <property type="entry name" value="Pep_deformylase"/>
    <property type="match status" value="1"/>
</dbReference>
<dbReference type="PIRSF" id="PIRSF004749">
    <property type="entry name" value="Pep_def"/>
    <property type="match status" value="1"/>
</dbReference>
<dbReference type="PRINTS" id="PR01576">
    <property type="entry name" value="PDEFORMYLASE"/>
</dbReference>
<dbReference type="SUPFAM" id="SSF56420">
    <property type="entry name" value="Peptide deformylase"/>
    <property type="match status" value="1"/>
</dbReference>
<organism>
    <name type="scientific">Ureaplasma parvum serovar 3 (strain ATCC 27815 / 27 / NCTC 11736)</name>
    <dbReference type="NCBI Taxonomy" id="505682"/>
    <lineage>
        <taxon>Bacteria</taxon>
        <taxon>Bacillati</taxon>
        <taxon>Mycoplasmatota</taxon>
        <taxon>Mycoplasmoidales</taxon>
        <taxon>Mycoplasmoidaceae</taxon>
        <taxon>Ureaplasma</taxon>
    </lineage>
</organism>
<gene>
    <name evidence="1" type="primary">def</name>
    <name type="ordered locus">UPA3_0484</name>
</gene>